<accession>A6QGI5</accession>
<sequence>MNLLSLLLILLGIILGVVGGYVVARNLLLQKQSQARQTAEDIVNQAHKEADNIKKEKLLEAKEENQILREQTEAELRERRSELQRQETRLLQKEENLERKSDLLDKKDEILEQKESKIEEKQQQVDAKESSVQTLIMKHEQELERISGLTQEEAINEQLQRVEEELSQDIAVLVKEKEKEAKEKVDKTAKELLATAVQRLAADHTSESTVSVVNLPNDEMKGRIIGREGRNIRTLETLTGIDLIIDDTPEAVILSGFDPIRREIARTALVNLVSDGRIHPGRIEDMVEKARKEVDDIIREAGEQATFEVNAHNMHPDLVKIVGRLNYRTSYGQNVLKHSIEVAHLASMLAAELGEDETLAKRAGLLHDVGKAIDHEVEGSHVEIGVELAKKYGENETVINAIHSHHGDVEPTSIISILVAAADALSAARPGARKETLENYIRRLERLETLSESYDGVEKAFAIQAGREIRVIVSPEEIDDLKSYRLARDIKNQIEDELQYPGHIKVTVVRETRAVEYAK</sequence>
<gene>
    <name evidence="1" type="primary">rny</name>
    <name type="synonym">cvfA</name>
    <name type="ordered locus">NWMN_1195</name>
</gene>
<reference key="1">
    <citation type="journal article" date="2008" name="J. Bacteriol.">
        <title>Genome sequence of Staphylococcus aureus strain Newman and comparative analysis of staphylococcal genomes: polymorphism and evolution of two major pathogenicity islands.</title>
        <authorList>
            <person name="Baba T."/>
            <person name="Bae T."/>
            <person name="Schneewind O."/>
            <person name="Takeuchi F."/>
            <person name="Hiramatsu K."/>
        </authorList>
    </citation>
    <scope>NUCLEOTIDE SEQUENCE [LARGE SCALE GENOMIC DNA]</scope>
    <source>
        <strain>Newman</strain>
    </source>
</reference>
<comment type="function">
    <text evidence="1">Endoribonuclease that initiates mRNA decay.</text>
</comment>
<comment type="subcellular location">
    <subcellularLocation>
        <location evidence="1">Cell membrane</location>
        <topology evidence="1">Single-pass membrane protein</topology>
    </subcellularLocation>
</comment>
<comment type="similarity">
    <text evidence="1">Belongs to the RNase Y family.</text>
</comment>
<feature type="chain" id="PRO_0000344935" description="Ribonuclease Y">
    <location>
        <begin position="1"/>
        <end position="519"/>
    </location>
</feature>
<feature type="transmembrane region" description="Helical" evidence="1">
    <location>
        <begin position="3"/>
        <end position="23"/>
    </location>
</feature>
<feature type="domain" description="KH" evidence="1">
    <location>
        <begin position="209"/>
        <end position="269"/>
    </location>
</feature>
<feature type="domain" description="HD" evidence="2">
    <location>
        <begin position="335"/>
        <end position="428"/>
    </location>
</feature>
<dbReference type="EC" id="3.1.-.-" evidence="1"/>
<dbReference type="EMBL" id="AP009351">
    <property type="protein sequence ID" value="BAF67467.1"/>
    <property type="molecule type" value="Genomic_DNA"/>
</dbReference>
<dbReference type="RefSeq" id="WP_001050913.1">
    <property type="nucleotide sequence ID" value="NZ_JBBIAE010000001.1"/>
</dbReference>
<dbReference type="SMR" id="A6QGI5"/>
<dbReference type="KEGG" id="sae:NWMN_1195"/>
<dbReference type="HOGENOM" id="CLU_028328_1_0_9"/>
<dbReference type="Proteomes" id="UP000006386">
    <property type="component" value="Chromosome"/>
</dbReference>
<dbReference type="GO" id="GO:0005886">
    <property type="term" value="C:plasma membrane"/>
    <property type="evidence" value="ECO:0007669"/>
    <property type="project" value="UniProtKB-SubCell"/>
</dbReference>
<dbReference type="GO" id="GO:0003723">
    <property type="term" value="F:RNA binding"/>
    <property type="evidence" value="ECO:0007669"/>
    <property type="project" value="UniProtKB-UniRule"/>
</dbReference>
<dbReference type="GO" id="GO:0004521">
    <property type="term" value="F:RNA endonuclease activity"/>
    <property type="evidence" value="ECO:0007669"/>
    <property type="project" value="UniProtKB-UniRule"/>
</dbReference>
<dbReference type="GO" id="GO:0006402">
    <property type="term" value="P:mRNA catabolic process"/>
    <property type="evidence" value="ECO:0007669"/>
    <property type="project" value="UniProtKB-UniRule"/>
</dbReference>
<dbReference type="CDD" id="cd00077">
    <property type="entry name" value="HDc"/>
    <property type="match status" value="1"/>
</dbReference>
<dbReference type="CDD" id="cd22431">
    <property type="entry name" value="KH-I_RNaseY"/>
    <property type="match status" value="1"/>
</dbReference>
<dbReference type="FunFam" id="1.10.3210.10:FF:000003">
    <property type="entry name" value="Ribonuclease Y"/>
    <property type="match status" value="1"/>
</dbReference>
<dbReference type="FunFam" id="3.30.1370.10:FF:000006">
    <property type="entry name" value="Ribonuclease Y"/>
    <property type="match status" value="1"/>
</dbReference>
<dbReference type="Gene3D" id="1.10.3210.10">
    <property type="entry name" value="Hypothetical protein af1432"/>
    <property type="match status" value="1"/>
</dbReference>
<dbReference type="Gene3D" id="3.30.1370.10">
    <property type="entry name" value="K Homology domain, type 1"/>
    <property type="match status" value="1"/>
</dbReference>
<dbReference type="HAMAP" id="MF_00335">
    <property type="entry name" value="RNase_Y"/>
    <property type="match status" value="1"/>
</dbReference>
<dbReference type="InterPro" id="IPR003607">
    <property type="entry name" value="HD/PDEase_dom"/>
</dbReference>
<dbReference type="InterPro" id="IPR006674">
    <property type="entry name" value="HD_domain"/>
</dbReference>
<dbReference type="InterPro" id="IPR006675">
    <property type="entry name" value="HDIG_dom"/>
</dbReference>
<dbReference type="InterPro" id="IPR004087">
    <property type="entry name" value="KH_dom"/>
</dbReference>
<dbReference type="InterPro" id="IPR004088">
    <property type="entry name" value="KH_dom_type_1"/>
</dbReference>
<dbReference type="InterPro" id="IPR036612">
    <property type="entry name" value="KH_dom_type_1_sf"/>
</dbReference>
<dbReference type="InterPro" id="IPR017705">
    <property type="entry name" value="Ribonuclease_Y"/>
</dbReference>
<dbReference type="InterPro" id="IPR022711">
    <property type="entry name" value="RNase_Y_N"/>
</dbReference>
<dbReference type="NCBIfam" id="TIGR00277">
    <property type="entry name" value="HDIG"/>
    <property type="match status" value="1"/>
</dbReference>
<dbReference type="NCBIfam" id="TIGR03319">
    <property type="entry name" value="RNase_Y"/>
    <property type="match status" value="1"/>
</dbReference>
<dbReference type="PANTHER" id="PTHR12826">
    <property type="entry name" value="RIBONUCLEASE Y"/>
    <property type="match status" value="1"/>
</dbReference>
<dbReference type="PANTHER" id="PTHR12826:SF15">
    <property type="entry name" value="RIBONUCLEASE Y"/>
    <property type="match status" value="1"/>
</dbReference>
<dbReference type="Pfam" id="PF01966">
    <property type="entry name" value="HD"/>
    <property type="match status" value="1"/>
</dbReference>
<dbReference type="Pfam" id="PF00013">
    <property type="entry name" value="KH_1"/>
    <property type="match status" value="1"/>
</dbReference>
<dbReference type="Pfam" id="PF12072">
    <property type="entry name" value="RNase_Y_N"/>
    <property type="match status" value="1"/>
</dbReference>
<dbReference type="SMART" id="SM00471">
    <property type="entry name" value="HDc"/>
    <property type="match status" value="1"/>
</dbReference>
<dbReference type="SMART" id="SM00322">
    <property type="entry name" value="KH"/>
    <property type="match status" value="1"/>
</dbReference>
<dbReference type="SUPFAM" id="SSF54791">
    <property type="entry name" value="Eukaryotic type KH-domain (KH-domain type I)"/>
    <property type="match status" value="1"/>
</dbReference>
<dbReference type="SUPFAM" id="SSF109604">
    <property type="entry name" value="HD-domain/PDEase-like"/>
    <property type="match status" value="1"/>
</dbReference>
<dbReference type="PROSITE" id="PS51831">
    <property type="entry name" value="HD"/>
    <property type="match status" value="1"/>
</dbReference>
<dbReference type="PROSITE" id="PS50084">
    <property type="entry name" value="KH_TYPE_1"/>
    <property type="match status" value="1"/>
</dbReference>
<protein>
    <recommendedName>
        <fullName evidence="1">Ribonuclease Y</fullName>
        <shortName evidence="1">RNase Y</shortName>
        <ecNumber evidence="1">3.1.-.-</ecNumber>
    </recommendedName>
    <alternativeName>
        <fullName>Conserved virulence factor A</fullName>
    </alternativeName>
</protein>
<name>RNY_STAAE</name>
<keyword id="KW-1003">Cell membrane</keyword>
<keyword id="KW-0255">Endonuclease</keyword>
<keyword id="KW-0378">Hydrolase</keyword>
<keyword id="KW-0472">Membrane</keyword>
<keyword id="KW-0540">Nuclease</keyword>
<keyword id="KW-0694">RNA-binding</keyword>
<keyword id="KW-0812">Transmembrane</keyword>
<keyword id="KW-1133">Transmembrane helix</keyword>
<keyword id="KW-0843">Virulence</keyword>
<evidence type="ECO:0000255" key="1">
    <source>
        <dbReference type="HAMAP-Rule" id="MF_00335"/>
    </source>
</evidence>
<evidence type="ECO:0000255" key="2">
    <source>
        <dbReference type="PROSITE-ProRule" id="PRU01175"/>
    </source>
</evidence>
<proteinExistence type="inferred from homology"/>
<organism>
    <name type="scientific">Staphylococcus aureus (strain Newman)</name>
    <dbReference type="NCBI Taxonomy" id="426430"/>
    <lineage>
        <taxon>Bacteria</taxon>
        <taxon>Bacillati</taxon>
        <taxon>Bacillota</taxon>
        <taxon>Bacilli</taxon>
        <taxon>Bacillales</taxon>
        <taxon>Staphylococcaceae</taxon>
        <taxon>Staphylococcus</taxon>
    </lineage>
</organism>